<feature type="chain" id="PRO_0000309634" description="Hydroxyacylglutathione hydrolase">
    <location>
        <begin position="1"/>
        <end position="257"/>
    </location>
</feature>
<feature type="binding site" evidence="1">
    <location>
        <position position="58"/>
    </location>
    <ligand>
        <name>Zn(2+)</name>
        <dbReference type="ChEBI" id="CHEBI:29105"/>
        <label>1</label>
    </ligand>
</feature>
<feature type="binding site" evidence="1">
    <location>
        <position position="60"/>
    </location>
    <ligand>
        <name>Zn(2+)</name>
        <dbReference type="ChEBI" id="CHEBI:29105"/>
        <label>1</label>
    </ligand>
</feature>
<feature type="binding site" evidence="1">
    <location>
        <position position="62"/>
    </location>
    <ligand>
        <name>Zn(2+)</name>
        <dbReference type="ChEBI" id="CHEBI:29105"/>
        <label>2</label>
    </ligand>
</feature>
<feature type="binding site" evidence="1">
    <location>
        <position position="63"/>
    </location>
    <ligand>
        <name>Zn(2+)</name>
        <dbReference type="ChEBI" id="CHEBI:29105"/>
        <label>2</label>
    </ligand>
</feature>
<feature type="binding site" evidence="1">
    <location>
        <position position="116"/>
    </location>
    <ligand>
        <name>Zn(2+)</name>
        <dbReference type="ChEBI" id="CHEBI:29105"/>
        <label>1</label>
    </ligand>
</feature>
<feature type="binding site" evidence="1">
    <location>
        <position position="135"/>
    </location>
    <ligand>
        <name>Zn(2+)</name>
        <dbReference type="ChEBI" id="CHEBI:29105"/>
        <label>1</label>
    </ligand>
</feature>
<feature type="binding site" evidence="1">
    <location>
        <position position="135"/>
    </location>
    <ligand>
        <name>Zn(2+)</name>
        <dbReference type="ChEBI" id="CHEBI:29105"/>
        <label>2</label>
    </ligand>
</feature>
<feature type="binding site" evidence="1">
    <location>
        <position position="173"/>
    </location>
    <ligand>
        <name>Zn(2+)</name>
        <dbReference type="ChEBI" id="CHEBI:29105"/>
        <label>2</label>
    </ligand>
</feature>
<organism>
    <name type="scientific">Brucella ovis (strain ATCC 25840 / 63/290 / NCTC 10512)</name>
    <dbReference type="NCBI Taxonomy" id="444178"/>
    <lineage>
        <taxon>Bacteria</taxon>
        <taxon>Pseudomonadati</taxon>
        <taxon>Pseudomonadota</taxon>
        <taxon>Alphaproteobacteria</taxon>
        <taxon>Hyphomicrobiales</taxon>
        <taxon>Brucellaceae</taxon>
        <taxon>Brucella/Ochrobactrum group</taxon>
        <taxon>Brucella</taxon>
    </lineage>
</organism>
<gene>
    <name evidence="1" type="primary">gloB</name>
    <name type="ordered locus">BOV_1863</name>
</gene>
<proteinExistence type="inferred from homology"/>
<protein>
    <recommendedName>
        <fullName evidence="1">Hydroxyacylglutathione hydrolase</fullName>
        <ecNumber evidence="1">3.1.2.6</ecNumber>
    </recommendedName>
    <alternativeName>
        <fullName evidence="1">Glyoxalase II</fullName>
        <shortName evidence="1">Glx II</shortName>
    </alternativeName>
</protein>
<dbReference type="EC" id="3.1.2.6" evidence="1"/>
<dbReference type="EMBL" id="CP000708">
    <property type="protein sequence ID" value="ABQ61865.1"/>
    <property type="status" value="ALT_INIT"/>
    <property type="molecule type" value="Genomic_DNA"/>
</dbReference>
<dbReference type="SMR" id="A5VSR1"/>
<dbReference type="KEGG" id="bov:BOV_1863"/>
<dbReference type="HOGENOM" id="CLU_030571_4_1_5"/>
<dbReference type="UniPathway" id="UPA00619">
    <property type="reaction ID" value="UER00676"/>
</dbReference>
<dbReference type="Proteomes" id="UP000006383">
    <property type="component" value="Chromosome I"/>
</dbReference>
<dbReference type="GO" id="GO:0004416">
    <property type="term" value="F:hydroxyacylglutathione hydrolase activity"/>
    <property type="evidence" value="ECO:0007669"/>
    <property type="project" value="UniProtKB-UniRule"/>
</dbReference>
<dbReference type="GO" id="GO:0046872">
    <property type="term" value="F:metal ion binding"/>
    <property type="evidence" value="ECO:0007669"/>
    <property type="project" value="UniProtKB-KW"/>
</dbReference>
<dbReference type="GO" id="GO:0019243">
    <property type="term" value="P:methylglyoxal catabolic process to D-lactate via S-lactoyl-glutathione"/>
    <property type="evidence" value="ECO:0007669"/>
    <property type="project" value="InterPro"/>
</dbReference>
<dbReference type="CDD" id="cd07723">
    <property type="entry name" value="hydroxyacylglutathione_hydrolase_MBL-fold"/>
    <property type="match status" value="1"/>
</dbReference>
<dbReference type="Gene3D" id="3.60.15.10">
    <property type="entry name" value="Ribonuclease Z/Hydroxyacylglutathione hydrolase-like"/>
    <property type="match status" value="1"/>
</dbReference>
<dbReference type="HAMAP" id="MF_01374">
    <property type="entry name" value="Glyoxalase_2"/>
    <property type="match status" value="1"/>
</dbReference>
<dbReference type="InterPro" id="IPR035680">
    <property type="entry name" value="Clx_II_MBL"/>
</dbReference>
<dbReference type="InterPro" id="IPR050110">
    <property type="entry name" value="Glyoxalase_II_hydrolase"/>
</dbReference>
<dbReference type="InterPro" id="IPR032282">
    <property type="entry name" value="HAGH_C"/>
</dbReference>
<dbReference type="InterPro" id="IPR017782">
    <property type="entry name" value="Hydroxyacylglutathione_Hdrlase"/>
</dbReference>
<dbReference type="InterPro" id="IPR001279">
    <property type="entry name" value="Metallo-B-lactamas"/>
</dbReference>
<dbReference type="InterPro" id="IPR036866">
    <property type="entry name" value="RibonucZ/Hydroxyglut_hydro"/>
</dbReference>
<dbReference type="NCBIfam" id="TIGR03413">
    <property type="entry name" value="GSH_gloB"/>
    <property type="match status" value="1"/>
</dbReference>
<dbReference type="PANTHER" id="PTHR43705">
    <property type="entry name" value="HYDROXYACYLGLUTATHIONE HYDROLASE"/>
    <property type="match status" value="1"/>
</dbReference>
<dbReference type="PANTHER" id="PTHR43705:SF1">
    <property type="entry name" value="HYDROXYACYLGLUTATHIONE HYDROLASE GLOB"/>
    <property type="match status" value="1"/>
</dbReference>
<dbReference type="Pfam" id="PF16123">
    <property type="entry name" value="HAGH_C"/>
    <property type="match status" value="1"/>
</dbReference>
<dbReference type="Pfam" id="PF00753">
    <property type="entry name" value="Lactamase_B"/>
    <property type="match status" value="1"/>
</dbReference>
<dbReference type="PIRSF" id="PIRSF005457">
    <property type="entry name" value="Glx"/>
    <property type="match status" value="1"/>
</dbReference>
<dbReference type="SMART" id="SM00849">
    <property type="entry name" value="Lactamase_B"/>
    <property type="match status" value="1"/>
</dbReference>
<dbReference type="SUPFAM" id="SSF56281">
    <property type="entry name" value="Metallo-hydrolase/oxidoreductase"/>
    <property type="match status" value="1"/>
</dbReference>
<accession>A5VSR1</accession>
<name>GLO2_BRUO2</name>
<keyword id="KW-0378">Hydrolase</keyword>
<keyword id="KW-0479">Metal-binding</keyword>
<keyword id="KW-0862">Zinc</keyword>
<sequence>MEQRLEIEQFICRSDNYGVLIHDPESALTATIDAPDAYAIEAALERRGWTLDFIFTTHHHLDHVEGNEPLKEKFGVSIIGPEAEKAKIPGIDRTVKGGDEFTFGLFKVKVISTPGHTAGGISYYLPDAKVVFTGDTLFALGCGRLFEGTPATMFHSLEKLVALPGDTALYCGHEYTQNNARFALTIDPDNSALKERAKEIARLRAHERMTLPSTIALEMATNPFLRWHDRTIRARLGLQDAPDEAVFAEIRKRKDMF</sequence>
<reference key="1">
    <citation type="journal article" date="2009" name="PLoS ONE">
        <title>Genome degradation in Brucella ovis corresponds with narrowing of its host range and tissue tropism.</title>
        <authorList>
            <person name="Tsolis R.M."/>
            <person name="Seshadri R."/>
            <person name="Santos R.L."/>
            <person name="Sangari F.J."/>
            <person name="Lobo J.M."/>
            <person name="de Jong M.F."/>
            <person name="Ren Q."/>
            <person name="Myers G."/>
            <person name="Brinkac L.M."/>
            <person name="Nelson W.C."/>
            <person name="Deboy R.T."/>
            <person name="Angiuoli S."/>
            <person name="Khouri H."/>
            <person name="Dimitrov G."/>
            <person name="Robinson J.R."/>
            <person name="Mulligan S."/>
            <person name="Walker R.L."/>
            <person name="Elzer P.E."/>
            <person name="Hassan K.A."/>
            <person name="Paulsen I.T."/>
        </authorList>
    </citation>
    <scope>NUCLEOTIDE SEQUENCE [LARGE SCALE GENOMIC DNA]</scope>
    <source>
        <strain>ATCC 25840 / 63/290 / NCTC 10512</strain>
    </source>
</reference>
<comment type="function">
    <text evidence="1">Thiolesterase that catalyzes the hydrolysis of S-D-lactoyl-glutathione to form glutathione and D-lactic acid.</text>
</comment>
<comment type="catalytic activity">
    <reaction evidence="1">
        <text>an S-(2-hydroxyacyl)glutathione + H2O = a 2-hydroxy carboxylate + glutathione + H(+)</text>
        <dbReference type="Rhea" id="RHEA:21864"/>
        <dbReference type="ChEBI" id="CHEBI:15377"/>
        <dbReference type="ChEBI" id="CHEBI:15378"/>
        <dbReference type="ChEBI" id="CHEBI:57925"/>
        <dbReference type="ChEBI" id="CHEBI:58896"/>
        <dbReference type="ChEBI" id="CHEBI:71261"/>
        <dbReference type="EC" id="3.1.2.6"/>
    </reaction>
</comment>
<comment type="cofactor">
    <cofactor evidence="1">
        <name>Zn(2+)</name>
        <dbReference type="ChEBI" id="CHEBI:29105"/>
    </cofactor>
    <text evidence="1">Binds 2 Zn(2+) ions per subunit.</text>
</comment>
<comment type="pathway">
    <text evidence="1">Secondary metabolite metabolism; methylglyoxal degradation; (R)-lactate from methylglyoxal: step 2/2.</text>
</comment>
<comment type="subunit">
    <text evidence="1">Monomer.</text>
</comment>
<comment type="similarity">
    <text evidence="1">Belongs to the metallo-beta-lactamase superfamily. Glyoxalase II family.</text>
</comment>
<comment type="sequence caution" evidence="2">
    <conflict type="erroneous initiation">
        <sequence resource="EMBL-CDS" id="ABQ61865"/>
    </conflict>
</comment>
<evidence type="ECO:0000255" key="1">
    <source>
        <dbReference type="HAMAP-Rule" id="MF_01374"/>
    </source>
</evidence>
<evidence type="ECO:0000305" key="2"/>